<accession>A1UHL4</accession>
<dbReference type="EC" id="2.5.1.72" evidence="1"/>
<dbReference type="EMBL" id="CP000518">
    <property type="protein sequence ID" value="ABL92322.1"/>
    <property type="molecule type" value="Genomic_DNA"/>
</dbReference>
<dbReference type="SMR" id="A1UHL4"/>
<dbReference type="STRING" id="189918.Mkms_3128"/>
<dbReference type="KEGG" id="mkm:Mkms_3128"/>
<dbReference type="HOGENOM" id="CLU_047382_0_0_11"/>
<dbReference type="UniPathway" id="UPA00253">
    <property type="reaction ID" value="UER00327"/>
</dbReference>
<dbReference type="GO" id="GO:0005829">
    <property type="term" value="C:cytosol"/>
    <property type="evidence" value="ECO:0007669"/>
    <property type="project" value="TreeGrafter"/>
</dbReference>
<dbReference type="GO" id="GO:0051539">
    <property type="term" value="F:4 iron, 4 sulfur cluster binding"/>
    <property type="evidence" value="ECO:0007669"/>
    <property type="project" value="UniProtKB-KW"/>
</dbReference>
<dbReference type="GO" id="GO:0046872">
    <property type="term" value="F:metal ion binding"/>
    <property type="evidence" value="ECO:0007669"/>
    <property type="project" value="UniProtKB-KW"/>
</dbReference>
<dbReference type="GO" id="GO:0008987">
    <property type="term" value="F:quinolinate synthetase A activity"/>
    <property type="evidence" value="ECO:0007669"/>
    <property type="project" value="UniProtKB-UniRule"/>
</dbReference>
<dbReference type="GO" id="GO:0034628">
    <property type="term" value="P:'de novo' NAD biosynthetic process from L-aspartate"/>
    <property type="evidence" value="ECO:0007669"/>
    <property type="project" value="TreeGrafter"/>
</dbReference>
<dbReference type="FunFam" id="3.40.50.10800:FF:000007">
    <property type="entry name" value="Quinolinate synthase A"/>
    <property type="match status" value="1"/>
</dbReference>
<dbReference type="Gene3D" id="3.40.50.10800">
    <property type="entry name" value="NadA-like"/>
    <property type="match status" value="3"/>
</dbReference>
<dbReference type="HAMAP" id="MF_00568">
    <property type="entry name" value="NadA_type2"/>
    <property type="match status" value="1"/>
</dbReference>
<dbReference type="InterPro" id="IPR003473">
    <property type="entry name" value="NadA"/>
</dbReference>
<dbReference type="InterPro" id="IPR036094">
    <property type="entry name" value="NadA_sf"/>
</dbReference>
<dbReference type="InterPro" id="IPR023066">
    <property type="entry name" value="Quinolinate_synth_type2"/>
</dbReference>
<dbReference type="NCBIfam" id="TIGR00550">
    <property type="entry name" value="nadA"/>
    <property type="match status" value="1"/>
</dbReference>
<dbReference type="NCBIfam" id="NF006878">
    <property type="entry name" value="PRK09375.1-2"/>
    <property type="match status" value="1"/>
</dbReference>
<dbReference type="NCBIfam" id="NF006879">
    <property type="entry name" value="PRK09375.1-4"/>
    <property type="match status" value="1"/>
</dbReference>
<dbReference type="PANTHER" id="PTHR30573:SF0">
    <property type="entry name" value="QUINOLINATE SYNTHASE, CHLOROPLASTIC"/>
    <property type="match status" value="1"/>
</dbReference>
<dbReference type="PANTHER" id="PTHR30573">
    <property type="entry name" value="QUINOLINATE SYNTHETASE A"/>
    <property type="match status" value="1"/>
</dbReference>
<dbReference type="Pfam" id="PF02445">
    <property type="entry name" value="NadA"/>
    <property type="match status" value="1"/>
</dbReference>
<dbReference type="SUPFAM" id="SSF142754">
    <property type="entry name" value="NadA-like"/>
    <property type="match status" value="1"/>
</dbReference>
<protein>
    <recommendedName>
        <fullName evidence="1">Quinolinate synthase</fullName>
        <ecNumber evidence="1">2.5.1.72</ecNumber>
    </recommendedName>
</protein>
<proteinExistence type="inferred from homology"/>
<gene>
    <name evidence="1" type="primary">nadA</name>
    <name type="ordered locus">Mkms_3128</name>
</gene>
<keyword id="KW-0004">4Fe-4S</keyword>
<keyword id="KW-0963">Cytoplasm</keyword>
<keyword id="KW-0408">Iron</keyword>
<keyword id="KW-0411">Iron-sulfur</keyword>
<keyword id="KW-0479">Metal-binding</keyword>
<keyword id="KW-0662">Pyridine nucleotide biosynthesis</keyword>
<keyword id="KW-0808">Transferase</keyword>
<name>NADA_MYCSK</name>
<organism>
    <name type="scientific">Mycobacterium sp. (strain KMS)</name>
    <dbReference type="NCBI Taxonomy" id="189918"/>
    <lineage>
        <taxon>Bacteria</taxon>
        <taxon>Bacillati</taxon>
        <taxon>Actinomycetota</taxon>
        <taxon>Actinomycetes</taxon>
        <taxon>Mycobacteriales</taxon>
        <taxon>Mycobacteriaceae</taxon>
        <taxon>Mycobacterium</taxon>
    </lineage>
</organism>
<feature type="chain" id="PRO_1000082319" description="Quinolinate synthase">
    <location>
        <begin position="1"/>
        <end position="337"/>
    </location>
</feature>
<feature type="binding site" evidence="1">
    <location>
        <position position="40"/>
    </location>
    <ligand>
        <name>iminosuccinate</name>
        <dbReference type="ChEBI" id="CHEBI:77875"/>
    </ligand>
</feature>
<feature type="binding site" evidence="1">
    <location>
        <position position="57"/>
    </location>
    <ligand>
        <name>iminosuccinate</name>
        <dbReference type="ChEBI" id="CHEBI:77875"/>
    </ligand>
</feature>
<feature type="binding site" evidence="1">
    <location>
        <position position="102"/>
    </location>
    <ligand>
        <name>[4Fe-4S] cluster</name>
        <dbReference type="ChEBI" id="CHEBI:49883"/>
    </ligand>
</feature>
<feature type="binding site" evidence="1">
    <location>
        <begin position="128"/>
        <end position="130"/>
    </location>
    <ligand>
        <name>iminosuccinate</name>
        <dbReference type="ChEBI" id="CHEBI:77875"/>
    </ligand>
</feature>
<feature type="binding site" evidence="1">
    <location>
        <position position="145"/>
    </location>
    <ligand>
        <name>iminosuccinate</name>
        <dbReference type="ChEBI" id="CHEBI:77875"/>
    </ligand>
</feature>
<feature type="binding site" evidence="1">
    <location>
        <position position="189"/>
    </location>
    <ligand>
        <name>[4Fe-4S] cluster</name>
        <dbReference type="ChEBI" id="CHEBI:49883"/>
    </ligand>
</feature>
<feature type="binding site" evidence="1">
    <location>
        <begin position="215"/>
        <end position="217"/>
    </location>
    <ligand>
        <name>iminosuccinate</name>
        <dbReference type="ChEBI" id="CHEBI:77875"/>
    </ligand>
</feature>
<feature type="binding site" evidence="1">
    <location>
        <position position="243"/>
    </location>
    <ligand>
        <name>iminosuccinate</name>
        <dbReference type="ChEBI" id="CHEBI:77875"/>
    </ligand>
</feature>
<feature type="binding site" evidence="1">
    <location>
        <position position="288"/>
    </location>
    <ligand>
        <name>[4Fe-4S] cluster</name>
        <dbReference type="ChEBI" id="CHEBI:49883"/>
    </ligand>
</feature>
<reference key="1">
    <citation type="submission" date="2006-12" db="EMBL/GenBank/DDBJ databases">
        <title>Complete sequence of chromosome of Mycobacterium sp. KMS.</title>
        <authorList>
            <consortium name="US DOE Joint Genome Institute"/>
            <person name="Copeland A."/>
            <person name="Lucas S."/>
            <person name="Lapidus A."/>
            <person name="Barry K."/>
            <person name="Detter J.C."/>
            <person name="Glavina del Rio T."/>
            <person name="Hammon N."/>
            <person name="Israni S."/>
            <person name="Dalin E."/>
            <person name="Tice H."/>
            <person name="Pitluck S."/>
            <person name="Kiss H."/>
            <person name="Brettin T."/>
            <person name="Bruce D."/>
            <person name="Han C."/>
            <person name="Tapia R."/>
            <person name="Gilna P."/>
            <person name="Schmutz J."/>
            <person name="Larimer F."/>
            <person name="Land M."/>
            <person name="Hauser L."/>
            <person name="Kyrpides N."/>
            <person name="Mikhailova N."/>
            <person name="Miller C.D."/>
            <person name="Richardson P."/>
        </authorList>
    </citation>
    <scope>NUCLEOTIDE SEQUENCE [LARGE SCALE GENOMIC DNA]</scope>
    <source>
        <strain>KMS</strain>
    </source>
</reference>
<comment type="function">
    <text evidence="1">Catalyzes the condensation of iminoaspartate with dihydroxyacetone phosphate to form quinolinate.</text>
</comment>
<comment type="catalytic activity">
    <reaction evidence="1">
        <text>iminosuccinate + dihydroxyacetone phosphate = quinolinate + phosphate + 2 H2O + H(+)</text>
        <dbReference type="Rhea" id="RHEA:25888"/>
        <dbReference type="ChEBI" id="CHEBI:15377"/>
        <dbReference type="ChEBI" id="CHEBI:15378"/>
        <dbReference type="ChEBI" id="CHEBI:29959"/>
        <dbReference type="ChEBI" id="CHEBI:43474"/>
        <dbReference type="ChEBI" id="CHEBI:57642"/>
        <dbReference type="ChEBI" id="CHEBI:77875"/>
        <dbReference type="EC" id="2.5.1.72"/>
    </reaction>
    <physiologicalReaction direction="left-to-right" evidence="1">
        <dbReference type="Rhea" id="RHEA:25889"/>
    </physiologicalReaction>
</comment>
<comment type="cofactor">
    <cofactor evidence="1">
        <name>[4Fe-4S] cluster</name>
        <dbReference type="ChEBI" id="CHEBI:49883"/>
    </cofactor>
    <text evidence="1">Binds 1 [4Fe-4S] cluster per subunit.</text>
</comment>
<comment type="pathway">
    <text evidence="1">Cofactor biosynthesis; NAD(+) biosynthesis; quinolinate from iminoaspartate: step 1/1.</text>
</comment>
<comment type="subcellular location">
    <subcellularLocation>
        <location evidence="1">Cytoplasm</location>
    </subcellularLocation>
</comment>
<comment type="similarity">
    <text evidence="1">Belongs to the quinolinate synthase family. Type 2 subfamily.</text>
</comment>
<sequence length="337" mass="36256">MTLLDETASAQFGDDVAPTEEWAAEVRRLARQRGATLLAHNYQLPAIQDVADHVGDSLALSRIAAEAPEDTIVFCGVHFMAETAKILSPDKTVLIPDARAGCSLADSITADQLREWKAEYPGAVVVSYVNTTAAVKAETDICCTSSNAVDVVASIPADREVLFCPDQFLGAHVRRVTGRTNMQIWAGECHVHAGINGDELADQARAHPDAELFVHPECGCATSALYLAGEGAFPADRVKILSTGGMLDAARESRASQVLVATEVGMLHQLRRAAPEIDFQAVNDRASCRYMKMITPAALLRCLTYGTDEVDVDHETARLARRSVQRMIEIGQPGGGE</sequence>
<evidence type="ECO:0000255" key="1">
    <source>
        <dbReference type="HAMAP-Rule" id="MF_00568"/>
    </source>
</evidence>